<gene>
    <name evidence="1" type="primary">secA2</name>
    <name type="ordered locus">Cgl1440</name>
    <name type="ordered locus">cg1629</name>
</gene>
<organism>
    <name type="scientific">Corynebacterium glutamicum (strain ATCC 13032 / DSM 20300 / JCM 1318 / BCRC 11384 / CCUG 27702 / LMG 3730 / NBRC 12168 / NCIMB 10025 / NRRL B-2784 / 534)</name>
    <dbReference type="NCBI Taxonomy" id="196627"/>
    <lineage>
        <taxon>Bacteria</taxon>
        <taxon>Bacillati</taxon>
        <taxon>Actinomycetota</taxon>
        <taxon>Actinomycetes</taxon>
        <taxon>Mycobacteriales</taxon>
        <taxon>Corynebacteriaceae</taxon>
        <taxon>Corynebacterium</taxon>
    </lineage>
</organism>
<protein>
    <recommendedName>
        <fullName evidence="1">Protein translocase subunit SecA 2</fullName>
        <ecNumber evidence="1">7.4.2.8</ecNumber>
    </recommendedName>
</protein>
<name>SECA2_CORGL</name>
<sequence>MAGFDWFWKALGGKSGRNQKRSVAIVNQVENHAAELDALDDVALAQRAKDLASGGRIDNHAEFLAILGVASQRTLGLKPYPVQSQAVLRLIEGDVVHMATGEGKTLVGAMAATGLGLMGKRVHSITVNDYLAVRDAEWMRPLVEFFGLSVASISEKMDAGERRQAYKAAIVYGPVNEIGFDVLRDQLITRREDAVQHGADVAIIDEADSVLVDEALVPLVLAGNQPGHAPRGKITDVVRSLKENDDYTIDDDRRNVFLTDKGAAKLEQQLGISSLYDDEHVGSTLVQVNLALHAQALLIRDIHYIVRDSKVLLIDASRGRVADLQRWPDGLQAAVEAKEGLAVSEGGKILDTITLQALIGRYPMACGMTGTAVEATDQLRTFYDLHVSVIERNHPLKRFDEADRIYATMAEKNRAIIDEIALLHSTGQPVLVGTHDVAESEELATALRELNIEVSVLNAKNDAEEAQIIAEAGDIGRVTVSTQMAGRGTDIRLGGADEADYDEVVKLGGLAVIGTARHRSQRLDNQLRGRAGRQGDPGLSLFFVSLDDDVVVSGGSGESVSAQPDATGLIDSDRIRDWVGHCQRVTEGQLLEIHSQSWNYNKLLADQRVIIDERRERLLDTALAWEELAQHAPARAAELEDLDQSVREQAARDIMLYHLDYNWSEHLALMDDVRESIHLRAIARETPLDEYHRIAVREFKDLAQRAVDDAVSTFKSVTIDHEGAHLDDEGLARPSATWTYMVSDNPLAGSGNSVISGIGNIFR</sequence>
<feature type="chain" id="PRO_0000318342" description="Protein translocase subunit SecA 2">
    <location>
        <begin position="1"/>
        <end position="763"/>
    </location>
</feature>
<feature type="binding site" evidence="1">
    <location>
        <position position="83"/>
    </location>
    <ligand>
        <name>ATP</name>
        <dbReference type="ChEBI" id="CHEBI:30616"/>
    </ligand>
</feature>
<feature type="binding site" evidence="1">
    <location>
        <begin position="101"/>
        <end position="105"/>
    </location>
    <ligand>
        <name>ATP</name>
        <dbReference type="ChEBI" id="CHEBI:30616"/>
    </ligand>
</feature>
<feature type="binding site" evidence="1">
    <location>
        <position position="490"/>
    </location>
    <ligand>
        <name>ATP</name>
        <dbReference type="ChEBI" id="CHEBI:30616"/>
    </ligand>
</feature>
<keyword id="KW-0067">ATP-binding</keyword>
<keyword id="KW-1003">Cell membrane</keyword>
<keyword id="KW-0963">Cytoplasm</keyword>
<keyword id="KW-0472">Membrane</keyword>
<keyword id="KW-0547">Nucleotide-binding</keyword>
<keyword id="KW-0653">Protein transport</keyword>
<keyword id="KW-1185">Reference proteome</keyword>
<keyword id="KW-1278">Translocase</keyword>
<keyword id="KW-0811">Translocation</keyword>
<keyword id="KW-0813">Transport</keyword>
<accession>Q8NQJ4</accession>
<accession>Q6M5E0</accession>
<dbReference type="EC" id="7.4.2.8" evidence="1"/>
<dbReference type="EMBL" id="BA000036">
    <property type="protein sequence ID" value="BAB98833.1"/>
    <property type="molecule type" value="Genomic_DNA"/>
</dbReference>
<dbReference type="EMBL" id="BX927152">
    <property type="protein sequence ID" value="CAF21449.1"/>
    <property type="molecule type" value="Genomic_DNA"/>
</dbReference>
<dbReference type="RefSeq" id="NP_600657.1">
    <property type="nucleotide sequence ID" value="NC_003450.3"/>
</dbReference>
<dbReference type="RefSeq" id="WP_011014367.1">
    <property type="nucleotide sequence ID" value="NC_006958.1"/>
</dbReference>
<dbReference type="SMR" id="Q8NQJ4"/>
<dbReference type="STRING" id="196627.cg1629"/>
<dbReference type="GeneID" id="1019414"/>
<dbReference type="KEGG" id="cgb:cg1629"/>
<dbReference type="KEGG" id="cgl:Cgl1440"/>
<dbReference type="PATRIC" id="fig|196627.13.peg.1407"/>
<dbReference type="eggNOG" id="COG0653">
    <property type="taxonomic scope" value="Bacteria"/>
</dbReference>
<dbReference type="HOGENOM" id="CLU_005314_3_2_11"/>
<dbReference type="OrthoDB" id="9805579at2"/>
<dbReference type="BioCyc" id="CORYNE:G18NG-11023-MONOMER"/>
<dbReference type="BRENDA" id="7.4.2.5">
    <property type="organism ID" value="960"/>
</dbReference>
<dbReference type="Proteomes" id="UP000000582">
    <property type="component" value="Chromosome"/>
</dbReference>
<dbReference type="Proteomes" id="UP000001009">
    <property type="component" value="Chromosome"/>
</dbReference>
<dbReference type="GO" id="GO:0031522">
    <property type="term" value="C:cell envelope Sec protein transport complex"/>
    <property type="evidence" value="ECO:0007669"/>
    <property type="project" value="TreeGrafter"/>
</dbReference>
<dbReference type="GO" id="GO:0005829">
    <property type="term" value="C:cytosol"/>
    <property type="evidence" value="ECO:0007669"/>
    <property type="project" value="TreeGrafter"/>
</dbReference>
<dbReference type="GO" id="GO:0005886">
    <property type="term" value="C:plasma membrane"/>
    <property type="evidence" value="ECO:0007669"/>
    <property type="project" value="UniProtKB-SubCell"/>
</dbReference>
<dbReference type="GO" id="GO:0005524">
    <property type="term" value="F:ATP binding"/>
    <property type="evidence" value="ECO:0007669"/>
    <property type="project" value="UniProtKB-UniRule"/>
</dbReference>
<dbReference type="GO" id="GO:0008564">
    <property type="term" value="F:protein-exporting ATPase activity"/>
    <property type="evidence" value="ECO:0007669"/>
    <property type="project" value="UniProtKB-EC"/>
</dbReference>
<dbReference type="GO" id="GO:0065002">
    <property type="term" value="P:intracellular protein transmembrane transport"/>
    <property type="evidence" value="ECO:0007669"/>
    <property type="project" value="UniProtKB-UniRule"/>
</dbReference>
<dbReference type="GO" id="GO:0017038">
    <property type="term" value="P:protein import"/>
    <property type="evidence" value="ECO:0007669"/>
    <property type="project" value="InterPro"/>
</dbReference>
<dbReference type="GO" id="GO:0006605">
    <property type="term" value="P:protein targeting"/>
    <property type="evidence" value="ECO:0007669"/>
    <property type="project" value="UniProtKB-UniRule"/>
</dbReference>
<dbReference type="GO" id="GO:0043952">
    <property type="term" value="P:protein transport by the Sec complex"/>
    <property type="evidence" value="ECO:0007669"/>
    <property type="project" value="TreeGrafter"/>
</dbReference>
<dbReference type="CDD" id="cd17928">
    <property type="entry name" value="DEXDc_SecA"/>
    <property type="match status" value="1"/>
</dbReference>
<dbReference type="CDD" id="cd18803">
    <property type="entry name" value="SF2_C_secA"/>
    <property type="match status" value="1"/>
</dbReference>
<dbReference type="FunFam" id="3.40.50.300:FF:000429">
    <property type="entry name" value="Preprotein translocase subunit SecA"/>
    <property type="match status" value="1"/>
</dbReference>
<dbReference type="Gene3D" id="1.10.3060.10">
    <property type="entry name" value="Helical scaffold and wing domains of SecA"/>
    <property type="match status" value="1"/>
</dbReference>
<dbReference type="Gene3D" id="3.40.50.300">
    <property type="entry name" value="P-loop containing nucleotide triphosphate hydrolases"/>
    <property type="match status" value="3"/>
</dbReference>
<dbReference type="Gene3D" id="3.90.1440.10">
    <property type="entry name" value="SecA, preprotein cross-linking domain"/>
    <property type="match status" value="1"/>
</dbReference>
<dbReference type="HAMAP" id="MF_01382">
    <property type="entry name" value="SecA"/>
    <property type="match status" value="1"/>
</dbReference>
<dbReference type="InterPro" id="IPR014001">
    <property type="entry name" value="Helicase_ATP-bd"/>
</dbReference>
<dbReference type="InterPro" id="IPR001650">
    <property type="entry name" value="Helicase_C-like"/>
</dbReference>
<dbReference type="InterPro" id="IPR027417">
    <property type="entry name" value="P-loop_NTPase"/>
</dbReference>
<dbReference type="InterPro" id="IPR000185">
    <property type="entry name" value="SecA"/>
</dbReference>
<dbReference type="InterPro" id="IPR026389">
    <property type="entry name" value="SecA_Actinobact-type"/>
</dbReference>
<dbReference type="InterPro" id="IPR020937">
    <property type="entry name" value="SecA_CS"/>
</dbReference>
<dbReference type="InterPro" id="IPR011115">
    <property type="entry name" value="SecA_DEAD"/>
</dbReference>
<dbReference type="InterPro" id="IPR014018">
    <property type="entry name" value="SecA_motor_DEAD"/>
</dbReference>
<dbReference type="InterPro" id="IPR011130">
    <property type="entry name" value="SecA_preprotein_X-link_dom"/>
</dbReference>
<dbReference type="InterPro" id="IPR044722">
    <property type="entry name" value="SecA_SF2_C"/>
</dbReference>
<dbReference type="InterPro" id="IPR011116">
    <property type="entry name" value="SecA_Wing/Scaffold"/>
</dbReference>
<dbReference type="InterPro" id="IPR036266">
    <property type="entry name" value="SecA_Wing/Scaffold_sf"/>
</dbReference>
<dbReference type="InterPro" id="IPR036670">
    <property type="entry name" value="SecA_X-link_sf"/>
</dbReference>
<dbReference type="NCBIfam" id="TIGR04221">
    <property type="entry name" value="SecA2_Mycobac"/>
    <property type="match status" value="1"/>
</dbReference>
<dbReference type="PANTHER" id="PTHR30612:SF0">
    <property type="entry name" value="CHLOROPLAST PROTEIN-TRANSPORTING ATPASE"/>
    <property type="match status" value="1"/>
</dbReference>
<dbReference type="PANTHER" id="PTHR30612">
    <property type="entry name" value="SECA INNER MEMBRANE COMPONENT OF SEC PROTEIN SECRETION SYSTEM"/>
    <property type="match status" value="1"/>
</dbReference>
<dbReference type="Pfam" id="PF21090">
    <property type="entry name" value="P-loop_SecA"/>
    <property type="match status" value="1"/>
</dbReference>
<dbReference type="Pfam" id="PF07517">
    <property type="entry name" value="SecA_DEAD"/>
    <property type="match status" value="1"/>
</dbReference>
<dbReference type="Pfam" id="PF01043">
    <property type="entry name" value="SecA_PP_bind"/>
    <property type="match status" value="1"/>
</dbReference>
<dbReference type="Pfam" id="PF07516">
    <property type="entry name" value="SecA_SW"/>
    <property type="match status" value="1"/>
</dbReference>
<dbReference type="PRINTS" id="PR00906">
    <property type="entry name" value="SECA"/>
</dbReference>
<dbReference type="SMART" id="SM00957">
    <property type="entry name" value="SecA_DEAD"/>
    <property type="match status" value="1"/>
</dbReference>
<dbReference type="SMART" id="SM00958">
    <property type="entry name" value="SecA_PP_bind"/>
    <property type="match status" value="1"/>
</dbReference>
<dbReference type="SUPFAM" id="SSF81886">
    <property type="entry name" value="Helical scaffold and wing domains of SecA"/>
    <property type="match status" value="1"/>
</dbReference>
<dbReference type="SUPFAM" id="SSF52540">
    <property type="entry name" value="P-loop containing nucleoside triphosphate hydrolases"/>
    <property type="match status" value="2"/>
</dbReference>
<dbReference type="SUPFAM" id="SSF81767">
    <property type="entry name" value="Pre-protein crosslinking domain of SecA"/>
    <property type="match status" value="1"/>
</dbReference>
<dbReference type="PROSITE" id="PS01312">
    <property type="entry name" value="SECA"/>
    <property type="match status" value="1"/>
</dbReference>
<dbReference type="PROSITE" id="PS51196">
    <property type="entry name" value="SECA_MOTOR_DEAD"/>
    <property type="match status" value="1"/>
</dbReference>
<evidence type="ECO:0000255" key="1">
    <source>
        <dbReference type="HAMAP-Rule" id="MF_01382"/>
    </source>
</evidence>
<proteinExistence type="inferred from homology"/>
<reference key="1">
    <citation type="journal article" date="2003" name="Appl. Microbiol. Biotechnol.">
        <title>The Corynebacterium glutamicum genome: features and impacts on biotechnological processes.</title>
        <authorList>
            <person name="Ikeda M."/>
            <person name="Nakagawa S."/>
        </authorList>
    </citation>
    <scope>NUCLEOTIDE SEQUENCE [LARGE SCALE GENOMIC DNA]</scope>
    <source>
        <strain>ATCC 13032 / DSM 20300 / JCM 1318 / BCRC 11384 / CCUG 27702 / LMG 3730 / NBRC 12168 / NCIMB 10025 / NRRL B-2784 / 534</strain>
    </source>
</reference>
<reference key="2">
    <citation type="journal article" date="2003" name="J. Biotechnol.">
        <title>The complete Corynebacterium glutamicum ATCC 13032 genome sequence and its impact on the production of L-aspartate-derived amino acids and vitamins.</title>
        <authorList>
            <person name="Kalinowski J."/>
            <person name="Bathe B."/>
            <person name="Bartels D."/>
            <person name="Bischoff N."/>
            <person name="Bott M."/>
            <person name="Burkovski A."/>
            <person name="Dusch N."/>
            <person name="Eggeling L."/>
            <person name="Eikmanns B.J."/>
            <person name="Gaigalat L."/>
            <person name="Goesmann A."/>
            <person name="Hartmann M."/>
            <person name="Huthmacher K."/>
            <person name="Kraemer R."/>
            <person name="Linke B."/>
            <person name="McHardy A.C."/>
            <person name="Meyer F."/>
            <person name="Moeckel B."/>
            <person name="Pfefferle W."/>
            <person name="Puehler A."/>
            <person name="Rey D.A."/>
            <person name="Rueckert C."/>
            <person name="Rupp O."/>
            <person name="Sahm H."/>
            <person name="Wendisch V.F."/>
            <person name="Wiegraebe I."/>
            <person name="Tauch A."/>
        </authorList>
    </citation>
    <scope>NUCLEOTIDE SEQUENCE [LARGE SCALE GENOMIC DNA]</scope>
    <source>
        <strain>ATCC 13032 / DSM 20300 / JCM 1318 / BCRC 11384 / CCUG 27702 / LMG 3730 / NBRC 12168 / NCIMB 10025 / NRRL B-2784 / 534</strain>
    </source>
</reference>
<comment type="function">
    <text evidence="1">Part of the Sec protein translocase complex. Interacts with the SecYEG preprotein conducting channel. Has a central role in coupling the hydrolysis of ATP to the transfer of proteins into and across the cell membrane, serving as an ATP-driven molecular motor driving the stepwise translocation of polypeptide chains across the membrane.</text>
</comment>
<comment type="catalytic activity">
    <reaction evidence="1">
        <text>ATP + H2O + cellular proteinSide 1 = ADP + phosphate + cellular proteinSide 2.</text>
        <dbReference type="EC" id="7.4.2.8"/>
    </reaction>
</comment>
<comment type="subunit">
    <text evidence="1">Monomer and homodimer. Part of the essential Sec protein translocation apparatus which comprises SecA, SecYEG and auxiliary proteins SecDF. Other proteins may also be involved.</text>
</comment>
<comment type="subcellular location">
    <subcellularLocation>
        <location evidence="1">Cell membrane</location>
        <topology evidence="1">Peripheral membrane protein</topology>
        <orientation evidence="1">Cytoplasmic side</orientation>
    </subcellularLocation>
    <subcellularLocation>
        <location evidence="1">Cytoplasm</location>
    </subcellularLocation>
    <text evidence="1">Distribution is 50-50.</text>
</comment>
<comment type="similarity">
    <text evidence="1">Belongs to the SecA family.</text>
</comment>